<proteinExistence type="inferred from homology"/>
<name>SYFA_CERS1</name>
<gene>
    <name evidence="1" type="primary">pheS</name>
    <name type="ordered locus">Rsph17029_0409</name>
</gene>
<protein>
    <recommendedName>
        <fullName evidence="1">Phenylalanine--tRNA ligase alpha subunit</fullName>
        <ecNumber evidence="1">6.1.1.20</ecNumber>
    </recommendedName>
    <alternativeName>
        <fullName evidence="1">Phenylalanyl-tRNA synthetase alpha subunit</fullName>
        <shortName evidence="1">PheRS</shortName>
    </alternativeName>
</protein>
<comment type="catalytic activity">
    <reaction evidence="1">
        <text>tRNA(Phe) + L-phenylalanine + ATP = L-phenylalanyl-tRNA(Phe) + AMP + diphosphate + H(+)</text>
        <dbReference type="Rhea" id="RHEA:19413"/>
        <dbReference type="Rhea" id="RHEA-COMP:9668"/>
        <dbReference type="Rhea" id="RHEA-COMP:9699"/>
        <dbReference type="ChEBI" id="CHEBI:15378"/>
        <dbReference type="ChEBI" id="CHEBI:30616"/>
        <dbReference type="ChEBI" id="CHEBI:33019"/>
        <dbReference type="ChEBI" id="CHEBI:58095"/>
        <dbReference type="ChEBI" id="CHEBI:78442"/>
        <dbReference type="ChEBI" id="CHEBI:78531"/>
        <dbReference type="ChEBI" id="CHEBI:456215"/>
        <dbReference type="EC" id="6.1.1.20"/>
    </reaction>
</comment>
<comment type="cofactor">
    <cofactor evidence="1">
        <name>Mg(2+)</name>
        <dbReference type="ChEBI" id="CHEBI:18420"/>
    </cofactor>
    <text evidence="1">Binds 2 magnesium ions per tetramer.</text>
</comment>
<comment type="subunit">
    <text evidence="1">Tetramer of two alpha and two beta subunits.</text>
</comment>
<comment type="subcellular location">
    <subcellularLocation>
        <location evidence="1">Cytoplasm</location>
    </subcellularLocation>
</comment>
<comment type="similarity">
    <text evidence="1">Belongs to the class-II aminoacyl-tRNA synthetase family. Phe-tRNA synthetase alpha subunit type 1 subfamily.</text>
</comment>
<sequence>MTALDTLRGKYIEAISSAADEAALEEVRLAALGKKGEISLKMRELGQMSPEERQTTGAALNRLRDEIDASLRARKQGLADAALDARLKTEWLDVTLPGRPRRAGTIHPVSQVMAELTAIFADMGFAVAEGPQVESDWFNFDALNIPPEHPARQEHDTFFMARAEGDDRPPHVLRTHTSPVQIRAMQAQGAPIRVIAPGRVYRMDMDQTHTPMFHQVEGLAIDRDISMANLKWVLEEFCRAFFEVPSVELRFRASHFPFTEPSAEVDIRCSWEGGQLRIGEGDGWLEILGSGMVHPKVLAAAGVNPDEWQGFAFGMGIDRIAMLKYGIPDLRAFFESDLRWLRHYGFAALDMPDLAGGLSR</sequence>
<accession>A3PGQ9</accession>
<dbReference type="EC" id="6.1.1.20" evidence="1"/>
<dbReference type="EMBL" id="CP000577">
    <property type="protein sequence ID" value="ABN75525.1"/>
    <property type="molecule type" value="Genomic_DNA"/>
</dbReference>
<dbReference type="RefSeq" id="WP_002722590.1">
    <property type="nucleotide sequence ID" value="NC_009049.1"/>
</dbReference>
<dbReference type="SMR" id="A3PGQ9"/>
<dbReference type="GeneID" id="3718969"/>
<dbReference type="KEGG" id="rsh:Rsph17029_0409"/>
<dbReference type="HOGENOM" id="CLU_025086_0_1_5"/>
<dbReference type="GO" id="GO:0005737">
    <property type="term" value="C:cytoplasm"/>
    <property type="evidence" value="ECO:0007669"/>
    <property type="project" value="UniProtKB-SubCell"/>
</dbReference>
<dbReference type="GO" id="GO:0005524">
    <property type="term" value="F:ATP binding"/>
    <property type="evidence" value="ECO:0007669"/>
    <property type="project" value="UniProtKB-UniRule"/>
</dbReference>
<dbReference type="GO" id="GO:0000287">
    <property type="term" value="F:magnesium ion binding"/>
    <property type="evidence" value="ECO:0007669"/>
    <property type="project" value="UniProtKB-UniRule"/>
</dbReference>
<dbReference type="GO" id="GO:0004826">
    <property type="term" value="F:phenylalanine-tRNA ligase activity"/>
    <property type="evidence" value="ECO:0007669"/>
    <property type="project" value="UniProtKB-UniRule"/>
</dbReference>
<dbReference type="GO" id="GO:0000049">
    <property type="term" value="F:tRNA binding"/>
    <property type="evidence" value="ECO:0007669"/>
    <property type="project" value="InterPro"/>
</dbReference>
<dbReference type="GO" id="GO:0006432">
    <property type="term" value="P:phenylalanyl-tRNA aminoacylation"/>
    <property type="evidence" value="ECO:0007669"/>
    <property type="project" value="UniProtKB-UniRule"/>
</dbReference>
<dbReference type="CDD" id="cd00496">
    <property type="entry name" value="PheRS_alpha_core"/>
    <property type="match status" value="1"/>
</dbReference>
<dbReference type="FunFam" id="3.30.930.10:FF:000003">
    <property type="entry name" value="Phenylalanine--tRNA ligase alpha subunit"/>
    <property type="match status" value="1"/>
</dbReference>
<dbReference type="Gene3D" id="3.30.930.10">
    <property type="entry name" value="Bira Bifunctional Protein, Domain 2"/>
    <property type="match status" value="1"/>
</dbReference>
<dbReference type="HAMAP" id="MF_00281">
    <property type="entry name" value="Phe_tRNA_synth_alpha1"/>
    <property type="match status" value="1"/>
</dbReference>
<dbReference type="InterPro" id="IPR006195">
    <property type="entry name" value="aa-tRNA-synth_II"/>
</dbReference>
<dbReference type="InterPro" id="IPR045864">
    <property type="entry name" value="aa-tRNA-synth_II/BPL/LPL"/>
</dbReference>
<dbReference type="InterPro" id="IPR004529">
    <property type="entry name" value="Phe-tRNA-synth_IIc_asu"/>
</dbReference>
<dbReference type="InterPro" id="IPR004188">
    <property type="entry name" value="Phe-tRNA_ligase_II_N"/>
</dbReference>
<dbReference type="InterPro" id="IPR022911">
    <property type="entry name" value="Phe_tRNA_ligase_alpha1_bac"/>
</dbReference>
<dbReference type="InterPro" id="IPR002319">
    <property type="entry name" value="Phenylalanyl-tRNA_Synthase"/>
</dbReference>
<dbReference type="InterPro" id="IPR010978">
    <property type="entry name" value="tRNA-bd_arm"/>
</dbReference>
<dbReference type="NCBIfam" id="TIGR00468">
    <property type="entry name" value="pheS"/>
    <property type="match status" value="1"/>
</dbReference>
<dbReference type="PANTHER" id="PTHR11538:SF41">
    <property type="entry name" value="PHENYLALANINE--TRNA LIGASE, MITOCHONDRIAL"/>
    <property type="match status" value="1"/>
</dbReference>
<dbReference type="PANTHER" id="PTHR11538">
    <property type="entry name" value="PHENYLALANYL-TRNA SYNTHETASE"/>
    <property type="match status" value="1"/>
</dbReference>
<dbReference type="Pfam" id="PF02912">
    <property type="entry name" value="Phe_tRNA-synt_N"/>
    <property type="match status" value="1"/>
</dbReference>
<dbReference type="Pfam" id="PF01409">
    <property type="entry name" value="tRNA-synt_2d"/>
    <property type="match status" value="1"/>
</dbReference>
<dbReference type="SUPFAM" id="SSF55681">
    <property type="entry name" value="Class II aaRS and biotin synthetases"/>
    <property type="match status" value="1"/>
</dbReference>
<dbReference type="SUPFAM" id="SSF46589">
    <property type="entry name" value="tRNA-binding arm"/>
    <property type="match status" value="1"/>
</dbReference>
<dbReference type="PROSITE" id="PS50862">
    <property type="entry name" value="AA_TRNA_LIGASE_II"/>
    <property type="match status" value="1"/>
</dbReference>
<reference key="1">
    <citation type="submission" date="2007-02" db="EMBL/GenBank/DDBJ databases">
        <title>Complete sequence of chromosome 1 of Rhodobacter sphaeroides ATCC 17029.</title>
        <authorList>
            <person name="Copeland A."/>
            <person name="Lucas S."/>
            <person name="Lapidus A."/>
            <person name="Barry K."/>
            <person name="Detter J.C."/>
            <person name="Glavina del Rio T."/>
            <person name="Hammon N."/>
            <person name="Israni S."/>
            <person name="Dalin E."/>
            <person name="Tice H."/>
            <person name="Pitluck S."/>
            <person name="Kiss H."/>
            <person name="Brettin T."/>
            <person name="Bruce D."/>
            <person name="Han C."/>
            <person name="Tapia R."/>
            <person name="Gilna P."/>
            <person name="Schmutz J."/>
            <person name="Larimer F."/>
            <person name="Land M."/>
            <person name="Hauser L."/>
            <person name="Kyrpides N."/>
            <person name="Mikhailova N."/>
            <person name="Richardson P."/>
            <person name="Mackenzie C."/>
            <person name="Choudhary M."/>
            <person name="Donohue T.J."/>
            <person name="Kaplan S."/>
        </authorList>
    </citation>
    <scope>NUCLEOTIDE SEQUENCE [LARGE SCALE GENOMIC DNA]</scope>
    <source>
        <strain>ATCC 17029 / ATH 2.4.9</strain>
    </source>
</reference>
<organism>
    <name type="scientific">Cereibacter sphaeroides (strain ATCC 17029 / ATH 2.4.9)</name>
    <name type="common">Rhodobacter sphaeroides</name>
    <dbReference type="NCBI Taxonomy" id="349101"/>
    <lineage>
        <taxon>Bacteria</taxon>
        <taxon>Pseudomonadati</taxon>
        <taxon>Pseudomonadota</taxon>
        <taxon>Alphaproteobacteria</taxon>
        <taxon>Rhodobacterales</taxon>
        <taxon>Paracoccaceae</taxon>
        <taxon>Cereibacter</taxon>
    </lineage>
</organism>
<keyword id="KW-0030">Aminoacyl-tRNA synthetase</keyword>
<keyword id="KW-0067">ATP-binding</keyword>
<keyword id="KW-0963">Cytoplasm</keyword>
<keyword id="KW-0436">Ligase</keyword>
<keyword id="KW-0460">Magnesium</keyword>
<keyword id="KW-0479">Metal-binding</keyword>
<keyword id="KW-0547">Nucleotide-binding</keyword>
<keyword id="KW-0648">Protein biosynthesis</keyword>
<feature type="chain" id="PRO_1000006884" description="Phenylalanine--tRNA ligase alpha subunit">
    <location>
        <begin position="1"/>
        <end position="360"/>
    </location>
</feature>
<feature type="binding site" evidence="1">
    <location>
        <position position="260"/>
    </location>
    <ligand>
        <name>Mg(2+)</name>
        <dbReference type="ChEBI" id="CHEBI:18420"/>
        <note>shared with beta subunit</note>
    </ligand>
</feature>
<evidence type="ECO:0000255" key="1">
    <source>
        <dbReference type="HAMAP-Rule" id="MF_00281"/>
    </source>
</evidence>